<accession>P06375</accession>
<geneLocation type="chloroplast"/>
<gene>
    <name type="primary">rps18</name>
</gene>
<organism>
    <name type="scientific">Marchantia polymorpha</name>
    <name type="common">Common liverwort</name>
    <name type="synonym">Marchantia aquatica</name>
    <dbReference type="NCBI Taxonomy" id="3197"/>
    <lineage>
        <taxon>Eukaryota</taxon>
        <taxon>Viridiplantae</taxon>
        <taxon>Streptophyta</taxon>
        <taxon>Embryophyta</taxon>
        <taxon>Marchantiophyta</taxon>
        <taxon>Marchantiopsida</taxon>
        <taxon>Marchantiidae</taxon>
        <taxon>Marchantiales</taxon>
        <taxon>Marchantiaceae</taxon>
        <taxon>Marchantia</taxon>
    </lineage>
</organism>
<sequence length="75" mass="8880">MNKSKRSSRRRMPPIRSGEIIDYKNISLLRRFVSEQGKILSRRMNRLTSKQQRLLTIAIKRARVLALLPFLNNEN</sequence>
<keyword id="KW-0150">Chloroplast</keyword>
<keyword id="KW-0934">Plastid</keyword>
<keyword id="KW-0687">Ribonucleoprotein</keyword>
<keyword id="KW-0689">Ribosomal protein</keyword>
<keyword id="KW-0694">RNA-binding</keyword>
<keyword id="KW-0699">rRNA-binding</keyword>
<name>RR18_MARPO</name>
<proteinExistence type="inferred from homology"/>
<evidence type="ECO:0000305" key="1"/>
<reference key="1">
    <citation type="journal article" date="1988" name="J. Mol. Biol.">
        <title>Structure and organization of Marchantia polymorpha chloroplast genome. III. Gene organization of the large single copy region from rbcL to trnI(CAU).</title>
        <authorList>
            <person name="Fukuzawa H."/>
            <person name="Kohchi T."/>
            <person name="Sano T."/>
            <person name="Shirai H."/>
            <person name="Umesono K."/>
            <person name="Inokuchi H."/>
            <person name="Ozeki H."/>
            <person name="Ohyama K."/>
        </authorList>
    </citation>
    <scope>NUCLEOTIDE SEQUENCE [GENOMIC DNA]</scope>
</reference>
<reference key="2">
    <citation type="journal article" date="1986" name="Nature">
        <title>Chloroplast gene organization deduced from complete sequence of liverwort Marchantia polymorpha chloroplast DNA.</title>
        <authorList>
            <person name="Ohyama K."/>
            <person name="Fukuzawa H."/>
            <person name="Kohchi T."/>
            <person name="Shirai H."/>
            <person name="Sano T."/>
            <person name="Sano S."/>
            <person name="Umesono K."/>
            <person name="Shiki Y."/>
            <person name="Takeuchi M."/>
            <person name="Chang Z."/>
            <person name="Aota S."/>
            <person name="Inokuchi H."/>
            <person name="Ozeki H."/>
        </authorList>
    </citation>
    <scope>NUCLEOTIDE SEQUENCE [LARGE SCALE GENOMIC DNA]</scope>
</reference>
<dbReference type="EMBL" id="X04465">
    <property type="protein sequence ID" value="CAA28107.1"/>
    <property type="molecule type" value="Genomic_DNA"/>
</dbReference>
<dbReference type="PIR" id="A02742">
    <property type="entry name" value="R3LV18"/>
</dbReference>
<dbReference type="RefSeq" id="NP_039321.1">
    <property type="nucleotide sequence ID" value="NC_001319.1"/>
</dbReference>
<dbReference type="RefSeq" id="YP_009646835.1">
    <property type="nucleotide sequence ID" value="NC_042505.1"/>
</dbReference>
<dbReference type="SMR" id="P06375"/>
<dbReference type="GeneID" id="2702559"/>
<dbReference type="GeneID" id="40386738"/>
<dbReference type="GO" id="GO:0009507">
    <property type="term" value="C:chloroplast"/>
    <property type="evidence" value="ECO:0007669"/>
    <property type="project" value="UniProtKB-SubCell"/>
</dbReference>
<dbReference type="GO" id="GO:1990904">
    <property type="term" value="C:ribonucleoprotein complex"/>
    <property type="evidence" value="ECO:0007669"/>
    <property type="project" value="UniProtKB-KW"/>
</dbReference>
<dbReference type="GO" id="GO:0005840">
    <property type="term" value="C:ribosome"/>
    <property type="evidence" value="ECO:0007669"/>
    <property type="project" value="UniProtKB-KW"/>
</dbReference>
<dbReference type="GO" id="GO:0019843">
    <property type="term" value="F:rRNA binding"/>
    <property type="evidence" value="ECO:0007669"/>
    <property type="project" value="UniProtKB-UniRule"/>
</dbReference>
<dbReference type="GO" id="GO:0003735">
    <property type="term" value="F:structural constituent of ribosome"/>
    <property type="evidence" value="ECO:0007669"/>
    <property type="project" value="InterPro"/>
</dbReference>
<dbReference type="GO" id="GO:0006412">
    <property type="term" value="P:translation"/>
    <property type="evidence" value="ECO:0007669"/>
    <property type="project" value="UniProtKB-UniRule"/>
</dbReference>
<dbReference type="FunFam" id="4.10.640.10:FF:000002">
    <property type="entry name" value="30S ribosomal protein S18, chloroplastic"/>
    <property type="match status" value="1"/>
</dbReference>
<dbReference type="Gene3D" id="4.10.640.10">
    <property type="entry name" value="Ribosomal protein S18"/>
    <property type="match status" value="1"/>
</dbReference>
<dbReference type="HAMAP" id="MF_00270">
    <property type="entry name" value="Ribosomal_bS18"/>
    <property type="match status" value="1"/>
</dbReference>
<dbReference type="InterPro" id="IPR001648">
    <property type="entry name" value="Ribosomal_bS18"/>
</dbReference>
<dbReference type="InterPro" id="IPR018275">
    <property type="entry name" value="Ribosomal_bS18_CS"/>
</dbReference>
<dbReference type="InterPro" id="IPR036870">
    <property type="entry name" value="Ribosomal_bS18_sf"/>
</dbReference>
<dbReference type="NCBIfam" id="TIGR00165">
    <property type="entry name" value="S18"/>
    <property type="match status" value="1"/>
</dbReference>
<dbReference type="PANTHER" id="PTHR13479">
    <property type="entry name" value="30S RIBOSOMAL PROTEIN S18"/>
    <property type="match status" value="1"/>
</dbReference>
<dbReference type="PANTHER" id="PTHR13479:SF40">
    <property type="entry name" value="SMALL RIBOSOMAL SUBUNIT PROTEIN BS18M"/>
    <property type="match status" value="1"/>
</dbReference>
<dbReference type="Pfam" id="PF01084">
    <property type="entry name" value="Ribosomal_S18"/>
    <property type="match status" value="1"/>
</dbReference>
<dbReference type="PRINTS" id="PR00974">
    <property type="entry name" value="RIBOSOMALS18"/>
</dbReference>
<dbReference type="SUPFAM" id="SSF46911">
    <property type="entry name" value="Ribosomal protein S18"/>
    <property type="match status" value="1"/>
</dbReference>
<dbReference type="PROSITE" id="PS00057">
    <property type="entry name" value="RIBOSOMAL_S18"/>
    <property type="match status" value="1"/>
</dbReference>
<protein>
    <recommendedName>
        <fullName evidence="1">Small ribosomal subunit protein bS18c</fullName>
    </recommendedName>
    <alternativeName>
        <fullName>30S ribosomal protein S18, chloroplastic</fullName>
    </alternativeName>
</protein>
<comment type="subunit">
    <text>Part of the 30S ribosomal subunit.</text>
</comment>
<comment type="subcellular location">
    <subcellularLocation>
        <location>Plastid</location>
        <location>Chloroplast</location>
    </subcellularLocation>
</comment>
<comment type="similarity">
    <text evidence="1">Belongs to the bacterial ribosomal protein bS18 family.</text>
</comment>
<feature type="chain" id="PRO_0000111293" description="Small ribosomal subunit protein bS18c">
    <location>
        <begin position="1"/>
        <end position="75"/>
    </location>
</feature>